<sequence length="59" mass="6501">MAVQQNKKSPSKRGMHRSHDALTAPALSVDSTTGEVHRPHHISPNGMYRGRKVVKVKGE</sequence>
<comment type="similarity">
    <text evidence="3">Belongs to the bacterial ribosomal protein bL32 family.</text>
</comment>
<keyword id="KW-0687">Ribonucleoprotein</keyword>
<keyword id="KW-0689">Ribosomal protein</keyword>
<feature type="initiator methionine" description="Removed" evidence="1">
    <location>
        <position position="1"/>
    </location>
</feature>
<feature type="chain" id="PRO_0000172375" description="Large ribosomal subunit protein bL32">
    <location>
        <begin position="2"/>
        <end position="59"/>
    </location>
</feature>
<feature type="region of interest" description="Disordered" evidence="2">
    <location>
        <begin position="1"/>
        <end position="59"/>
    </location>
</feature>
<feature type="compositionally biased region" description="Basic residues" evidence="2">
    <location>
        <begin position="49"/>
        <end position="59"/>
    </location>
</feature>
<accession>Q9JW52</accession>
<accession>A1IPZ5</accession>
<dbReference type="EMBL" id="AL157959">
    <property type="protein sequence ID" value="CAM07820.1"/>
    <property type="molecule type" value="Genomic_DNA"/>
</dbReference>
<dbReference type="PIR" id="H81972">
    <property type="entry name" value="H81972"/>
</dbReference>
<dbReference type="RefSeq" id="WP_002246447.1">
    <property type="nucleotide sequence ID" value="NC_003116.1"/>
</dbReference>
<dbReference type="SMR" id="Q9JW52"/>
<dbReference type="EnsemblBacteria" id="CAM07820">
    <property type="protein sequence ID" value="CAM07820"/>
    <property type="gene ID" value="NMA0544"/>
</dbReference>
<dbReference type="GeneID" id="93386815"/>
<dbReference type="KEGG" id="nma:NMA0544"/>
<dbReference type="HOGENOM" id="CLU_129084_2_1_4"/>
<dbReference type="Proteomes" id="UP000000626">
    <property type="component" value="Chromosome"/>
</dbReference>
<dbReference type="GO" id="GO:0015934">
    <property type="term" value="C:large ribosomal subunit"/>
    <property type="evidence" value="ECO:0007669"/>
    <property type="project" value="InterPro"/>
</dbReference>
<dbReference type="GO" id="GO:0003735">
    <property type="term" value="F:structural constituent of ribosome"/>
    <property type="evidence" value="ECO:0007669"/>
    <property type="project" value="InterPro"/>
</dbReference>
<dbReference type="GO" id="GO:0006412">
    <property type="term" value="P:translation"/>
    <property type="evidence" value="ECO:0007669"/>
    <property type="project" value="UniProtKB-UniRule"/>
</dbReference>
<dbReference type="HAMAP" id="MF_00340">
    <property type="entry name" value="Ribosomal_bL32"/>
    <property type="match status" value="1"/>
</dbReference>
<dbReference type="InterPro" id="IPR002677">
    <property type="entry name" value="Ribosomal_bL32"/>
</dbReference>
<dbReference type="InterPro" id="IPR044957">
    <property type="entry name" value="Ribosomal_bL32_bact"/>
</dbReference>
<dbReference type="InterPro" id="IPR011332">
    <property type="entry name" value="Ribosomal_zn-bd"/>
</dbReference>
<dbReference type="NCBIfam" id="TIGR01031">
    <property type="entry name" value="rpmF_bact"/>
    <property type="match status" value="1"/>
</dbReference>
<dbReference type="PANTHER" id="PTHR35534">
    <property type="entry name" value="50S RIBOSOMAL PROTEIN L32"/>
    <property type="match status" value="1"/>
</dbReference>
<dbReference type="PANTHER" id="PTHR35534:SF1">
    <property type="entry name" value="LARGE RIBOSOMAL SUBUNIT PROTEIN BL32"/>
    <property type="match status" value="1"/>
</dbReference>
<dbReference type="Pfam" id="PF01783">
    <property type="entry name" value="Ribosomal_L32p"/>
    <property type="match status" value="1"/>
</dbReference>
<dbReference type="SUPFAM" id="SSF57829">
    <property type="entry name" value="Zn-binding ribosomal proteins"/>
    <property type="match status" value="1"/>
</dbReference>
<protein>
    <recommendedName>
        <fullName evidence="3">Large ribosomal subunit protein bL32</fullName>
    </recommendedName>
    <alternativeName>
        <fullName>50S ribosomal protein L32</fullName>
    </alternativeName>
</protein>
<reference key="1">
    <citation type="journal article" date="2000" name="Nature">
        <title>Complete DNA sequence of a serogroup A strain of Neisseria meningitidis Z2491.</title>
        <authorList>
            <person name="Parkhill J."/>
            <person name="Achtman M."/>
            <person name="James K.D."/>
            <person name="Bentley S.D."/>
            <person name="Churcher C.M."/>
            <person name="Klee S.R."/>
            <person name="Morelli G."/>
            <person name="Basham D."/>
            <person name="Brown D."/>
            <person name="Chillingworth T."/>
            <person name="Davies R.M."/>
            <person name="Davis P."/>
            <person name="Devlin K."/>
            <person name="Feltwell T."/>
            <person name="Hamlin N."/>
            <person name="Holroyd S."/>
            <person name="Jagels K."/>
            <person name="Leather S."/>
            <person name="Moule S."/>
            <person name="Mungall K.L."/>
            <person name="Quail M.A."/>
            <person name="Rajandream M.A."/>
            <person name="Rutherford K.M."/>
            <person name="Simmonds M."/>
            <person name="Skelton J."/>
            <person name="Whitehead S."/>
            <person name="Spratt B.G."/>
            <person name="Barrell B.G."/>
        </authorList>
    </citation>
    <scope>NUCLEOTIDE SEQUENCE [LARGE SCALE GENOMIC DNA]</scope>
    <source>
        <strain>DSM 15465 / Z2491</strain>
    </source>
</reference>
<proteinExistence type="inferred from homology"/>
<name>RL32_NEIMA</name>
<evidence type="ECO:0000250" key="1"/>
<evidence type="ECO:0000256" key="2">
    <source>
        <dbReference type="SAM" id="MobiDB-lite"/>
    </source>
</evidence>
<evidence type="ECO:0000305" key="3"/>
<organism>
    <name type="scientific">Neisseria meningitidis serogroup A / serotype 4A (strain DSM 15465 / Z2491)</name>
    <dbReference type="NCBI Taxonomy" id="122587"/>
    <lineage>
        <taxon>Bacteria</taxon>
        <taxon>Pseudomonadati</taxon>
        <taxon>Pseudomonadota</taxon>
        <taxon>Betaproteobacteria</taxon>
        <taxon>Neisseriales</taxon>
        <taxon>Neisseriaceae</taxon>
        <taxon>Neisseria</taxon>
    </lineage>
</organism>
<gene>
    <name type="primary">rpmF</name>
    <name type="ordered locus">NMA0544</name>
</gene>